<evidence type="ECO:0000255" key="1">
    <source>
        <dbReference type="HAMAP-Rule" id="MF_01377"/>
    </source>
</evidence>
<name>YEGS_YERPG</name>
<keyword id="KW-0067">ATP-binding</keyword>
<keyword id="KW-0963">Cytoplasm</keyword>
<keyword id="KW-0418">Kinase</keyword>
<keyword id="KW-0444">Lipid biosynthesis</keyword>
<keyword id="KW-0443">Lipid metabolism</keyword>
<keyword id="KW-0460">Magnesium</keyword>
<keyword id="KW-0479">Metal-binding</keyword>
<keyword id="KW-0547">Nucleotide-binding</keyword>
<keyword id="KW-0594">Phospholipid biosynthesis</keyword>
<keyword id="KW-1208">Phospholipid metabolism</keyword>
<keyword id="KW-0808">Transferase</keyword>
<protein>
    <recommendedName>
        <fullName evidence="1">Probable lipid kinase YegS-like</fullName>
        <ecNumber evidence="1">2.7.1.-</ecNumber>
    </recommendedName>
</protein>
<reference key="1">
    <citation type="journal article" date="2010" name="J. Bacteriol.">
        <title>Genome sequence of the deep-rooted Yersinia pestis strain Angola reveals new insights into the evolution and pangenome of the plague bacterium.</title>
        <authorList>
            <person name="Eppinger M."/>
            <person name="Worsham P.L."/>
            <person name="Nikolich M.P."/>
            <person name="Riley D.R."/>
            <person name="Sebastian Y."/>
            <person name="Mou S."/>
            <person name="Achtman M."/>
            <person name="Lindler L.E."/>
            <person name="Ravel J."/>
        </authorList>
    </citation>
    <scope>NUCLEOTIDE SEQUENCE [LARGE SCALE GENOMIC DNA]</scope>
    <source>
        <strain>Angola</strain>
    </source>
</reference>
<gene>
    <name type="ordered locus">YpAngola_A3095</name>
</gene>
<proteinExistence type="inferred from homology"/>
<feature type="chain" id="PRO_1000144882" description="Probable lipid kinase YegS-like">
    <location>
        <begin position="1"/>
        <end position="296"/>
    </location>
</feature>
<feature type="domain" description="DAGKc" evidence="1">
    <location>
        <begin position="1"/>
        <end position="130"/>
    </location>
</feature>
<feature type="active site" description="Proton acceptor" evidence="1">
    <location>
        <position position="268"/>
    </location>
</feature>
<feature type="binding site" evidence="1">
    <location>
        <position position="37"/>
    </location>
    <ligand>
        <name>ATP</name>
        <dbReference type="ChEBI" id="CHEBI:30616"/>
    </ligand>
</feature>
<feature type="binding site" evidence="1">
    <location>
        <begin position="63"/>
        <end position="69"/>
    </location>
    <ligand>
        <name>ATP</name>
        <dbReference type="ChEBI" id="CHEBI:30616"/>
    </ligand>
</feature>
<feature type="binding site" evidence="1">
    <location>
        <position position="92"/>
    </location>
    <ligand>
        <name>ATP</name>
        <dbReference type="ChEBI" id="CHEBI:30616"/>
    </ligand>
</feature>
<feature type="binding site" evidence="1">
    <location>
        <position position="212"/>
    </location>
    <ligand>
        <name>Mg(2+)</name>
        <dbReference type="ChEBI" id="CHEBI:18420"/>
    </ligand>
</feature>
<feature type="binding site" evidence="1">
    <location>
        <position position="215"/>
    </location>
    <ligand>
        <name>Mg(2+)</name>
        <dbReference type="ChEBI" id="CHEBI:18420"/>
    </ligand>
</feature>
<feature type="binding site" evidence="1">
    <location>
        <position position="217"/>
    </location>
    <ligand>
        <name>Mg(2+)</name>
        <dbReference type="ChEBI" id="CHEBI:18420"/>
    </ligand>
</feature>
<organism>
    <name type="scientific">Yersinia pestis bv. Antiqua (strain Angola)</name>
    <dbReference type="NCBI Taxonomy" id="349746"/>
    <lineage>
        <taxon>Bacteria</taxon>
        <taxon>Pseudomonadati</taxon>
        <taxon>Pseudomonadota</taxon>
        <taxon>Gammaproteobacteria</taxon>
        <taxon>Enterobacterales</taxon>
        <taxon>Yersiniaceae</taxon>
        <taxon>Yersinia</taxon>
    </lineage>
</organism>
<accession>A9QZU2</accession>
<sequence length="296" mass="31535">MPHTLLILNGKESGNPEVREAVKNVRDEGLTLHVRITWEHGDAKRYVEEAATLAVSTVIAGGGDGTINEVATALMSLPADKRPCLGILPLGTANDFATGCNIPLQIENALQLAVKGRAVAIDLAQVNGEHYFINMATGGFGTRITTETPDKLKAALGGVSYFIHGLMRLDALKADSCKIHGPDFHWSGDALVIGIGNGKQAGGGQLLCPDALINDGLMQLRLLTAKELLPAVLSTLFNGEKNKNVIDATVPWLDITAPNDITFNLDGEPLSGRHFHIEILPHAIQCRLPPNCPLLG</sequence>
<comment type="function">
    <text evidence="1">Probably phosphorylates lipids; the in vivo substrate is unknown.</text>
</comment>
<comment type="cofactor">
    <cofactor evidence="1">
        <name>Mg(2+)</name>
        <dbReference type="ChEBI" id="CHEBI:18420"/>
    </cofactor>
    <cofactor evidence="1">
        <name>Ca(2+)</name>
        <dbReference type="ChEBI" id="CHEBI:29108"/>
    </cofactor>
    <text evidence="1">Binds 1 Mg(2+) ion per subunit. Ca(2+) may be able to substitute.</text>
</comment>
<comment type="subcellular location">
    <subcellularLocation>
        <location evidence="1">Cytoplasm</location>
    </subcellularLocation>
</comment>
<comment type="similarity">
    <text evidence="1">Belongs to the diacylglycerol/lipid kinase family. YegS lipid kinase subfamily.</text>
</comment>
<dbReference type="EC" id="2.7.1.-" evidence="1"/>
<dbReference type="EMBL" id="CP000901">
    <property type="protein sequence ID" value="ABX85062.1"/>
    <property type="molecule type" value="Genomic_DNA"/>
</dbReference>
<dbReference type="SMR" id="A9QZU2"/>
<dbReference type="KEGG" id="ypg:YpAngola_A3095"/>
<dbReference type="PATRIC" id="fig|349746.12.peg.4153"/>
<dbReference type="GO" id="GO:0005737">
    <property type="term" value="C:cytoplasm"/>
    <property type="evidence" value="ECO:0007669"/>
    <property type="project" value="UniProtKB-SubCell"/>
</dbReference>
<dbReference type="GO" id="GO:0005886">
    <property type="term" value="C:plasma membrane"/>
    <property type="evidence" value="ECO:0007669"/>
    <property type="project" value="TreeGrafter"/>
</dbReference>
<dbReference type="GO" id="GO:0005524">
    <property type="term" value="F:ATP binding"/>
    <property type="evidence" value="ECO:0007669"/>
    <property type="project" value="UniProtKB-UniRule"/>
</dbReference>
<dbReference type="GO" id="GO:0001727">
    <property type="term" value="F:lipid kinase activity"/>
    <property type="evidence" value="ECO:0007669"/>
    <property type="project" value="UniProtKB-UniRule"/>
</dbReference>
<dbReference type="GO" id="GO:0000287">
    <property type="term" value="F:magnesium ion binding"/>
    <property type="evidence" value="ECO:0007669"/>
    <property type="project" value="UniProtKB-UniRule"/>
</dbReference>
<dbReference type="GO" id="GO:0008654">
    <property type="term" value="P:phospholipid biosynthetic process"/>
    <property type="evidence" value="ECO:0007669"/>
    <property type="project" value="UniProtKB-UniRule"/>
</dbReference>
<dbReference type="Gene3D" id="2.60.200.40">
    <property type="match status" value="1"/>
</dbReference>
<dbReference type="Gene3D" id="3.40.50.10330">
    <property type="entry name" value="Probable inorganic polyphosphate/atp-NAD kinase, domain 1"/>
    <property type="match status" value="1"/>
</dbReference>
<dbReference type="HAMAP" id="MF_01377">
    <property type="entry name" value="YegS"/>
    <property type="match status" value="1"/>
</dbReference>
<dbReference type="InterPro" id="IPR017438">
    <property type="entry name" value="ATP-NAD_kinase_N"/>
</dbReference>
<dbReference type="InterPro" id="IPR005218">
    <property type="entry name" value="Diacylglycerol/lipid_kinase"/>
</dbReference>
<dbReference type="InterPro" id="IPR001206">
    <property type="entry name" value="Diacylglycerol_kinase_cat_dom"/>
</dbReference>
<dbReference type="InterPro" id="IPR022433">
    <property type="entry name" value="Lip_kinase_YegS"/>
</dbReference>
<dbReference type="InterPro" id="IPR050187">
    <property type="entry name" value="Lipid_Phosphate_FormReg"/>
</dbReference>
<dbReference type="InterPro" id="IPR016064">
    <property type="entry name" value="NAD/diacylglycerol_kinase_sf"/>
</dbReference>
<dbReference type="InterPro" id="IPR045540">
    <property type="entry name" value="YegS/DAGK_C"/>
</dbReference>
<dbReference type="NCBIfam" id="TIGR03702">
    <property type="entry name" value="lip_kinase_YegS"/>
    <property type="match status" value="1"/>
</dbReference>
<dbReference type="NCBIfam" id="NF009602">
    <property type="entry name" value="PRK13054.1"/>
    <property type="match status" value="1"/>
</dbReference>
<dbReference type="NCBIfam" id="TIGR00147">
    <property type="entry name" value="YegS/Rv2252/BmrU family lipid kinase"/>
    <property type="match status" value="1"/>
</dbReference>
<dbReference type="PANTHER" id="PTHR12358:SF106">
    <property type="entry name" value="LIPID KINASE YEGS"/>
    <property type="match status" value="1"/>
</dbReference>
<dbReference type="PANTHER" id="PTHR12358">
    <property type="entry name" value="SPHINGOSINE KINASE"/>
    <property type="match status" value="1"/>
</dbReference>
<dbReference type="Pfam" id="PF00781">
    <property type="entry name" value="DAGK_cat"/>
    <property type="match status" value="1"/>
</dbReference>
<dbReference type="Pfam" id="PF19279">
    <property type="entry name" value="YegS_C"/>
    <property type="match status" value="1"/>
</dbReference>
<dbReference type="SMART" id="SM00046">
    <property type="entry name" value="DAGKc"/>
    <property type="match status" value="1"/>
</dbReference>
<dbReference type="SUPFAM" id="SSF111331">
    <property type="entry name" value="NAD kinase/diacylglycerol kinase-like"/>
    <property type="match status" value="1"/>
</dbReference>
<dbReference type="PROSITE" id="PS50146">
    <property type="entry name" value="DAGK"/>
    <property type="match status" value="1"/>
</dbReference>